<proteinExistence type="inferred from homology"/>
<accession>A2ZLC1</accession>
<organism>
    <name type="scientific">Oryza sativa subsp. indica</name>
    <name type="common">Rice</name>
    <dbReference type="NCBI Taxonomy" id="39946"/>
    <lineage>
        <taxon>Eukaryota</taxon>
        <taxon>Viridiplantae</taxon>
        <taxon>Streptophyta</taxon>
        <taxon>Embryophyta</taxon>
        <taxon>Tracheophyta</taxon>
        <taxon>Spermatophyta</taxon>
        <taxon>Magnoliopsida</taxon>
        <taxon>Liliopsida</taxon>
        <taxon>Poales</taxon>
        <taxon>Poaceae</taxon>
        <taxon>BOP clade</taxon>
        <taxon>Oryzoideae</taxon>
        <taxon>Oryzeae</taxon>
        <taxon>Oryzinae</taxon>
        <taxon>Oryza</taxon>
        <taxon>Oryza sativa</taxon>
    </lineage>
</organism>
<keyword id="KW-0150">Chloroplast</keyword>
<keyword id="KW-0251">Elongation factor</keyword>
<keyword id="KW-0934">Plastid</keyword>
<keyword id="KW-0648">Protein biosynthesis</keyword>
<keyword id="KW-1185">Reference proteome</keyword>
<keyword id="KW-0677">Repeat</keyword>
<keyword id="KW-0809">Transit peptide</keyword>
<evidence type="ECO:0000250" key="1">
    <source>
        <dbReference type="UniProtKB" id="A8J637"/>
    </source>
</evidence>
<evidence type="ECO:0000255" key="2"/>
<evidence type="ECO:0000255" key="3">
    <source>
        <dbReference type="PROSITE-ProRule" id="PRU00180"/>
    </source>
</evidence>
<evidence type="ECO:0000256" key="4">
    <source>
        <dbReference type="SAM" id="MobiDB-lite"/>
    </source>
</evidence>
<evidence type="ECO:0000303" key="5">
    <source>
    </source>
</evidence>
<evidence type="ECO:0000305" key="6"/>
<evidence type="ECO:0000312" key="7">
    <source>
        <dbReference type="EMBL" id="EAY83405.1"/>
    </source>
</evidence>
<sequence>MTPVVHCSVGNISLFHIGSFRPSHEIQIRRFRSTERYSRVPSRRLLQPQRAFNLISIYKRSSWSSARRPRTLSAATVGTDVTVEDPNPPPSGETSEESSEDTAPDTAEASEQAEASTSSIPKAGRNIRKSEMPPLNDEDLVPGASFTGKVRSIKPFGVFVDIGAFTEGLVHISRVSDGFVKDISSLFTVGQEVSVRLVEANKETGRISLTMRTGGDYVKPKTETPKAASGGRNTTATTSRGSPRQTRERDEAKSMGETNYVQGQFLDGVVKNSTRAGSFVTLPDGSEGFLPREEEAVALFTLIGHSALEVGQQVRVKVLNVVRGQVTLTMKEGEDDEEDLASLNTQLKQGWSRGTNAFELAFRRNKEISAFLDQREKIIVPDVQEAAVASVGTELDAEVGIEQSPGKEPETGNAESVAIDSSITEVKETDSIAAVEKDSEISKTESVETASSVVISEDDSTVDGKLVEPTASVSATETEIKEDSSEGSVTTEPTEAASTEFVTAVVEESAPTASSVETSEDDSTVDDKLVEPTASVSATEAESKEDSSEGSVASTESVTAVVEESAPVSSVAIEVPAPEASEASAQEIIEDSTTVEGAADDQTVESDSPPPEGVELSSNGAPDSSIAEDKPDEPEESLIVEEVPVTASSESEDKEPAAVPEEVAASSEKTADVAVAGAEASTATATISPALVKQLREATGAGMMDCKKALAESGGDIEKAQEFLRKKGLAAADKRAGRATAEGRIGSYIHDSRIGVLIEVNCETDFVSRGDIFKELVDDLAMQVAACPQVQYISLDDVPEEVMKKETELEMQREDLLSKPEQIRSKIVEGRVKKRLGEYALLEQPFIKNDKVTISEWVKQTIATIGENMKVNRFVRYNLGEGLEKRSQDFAAEVAAQTAAKAPPAAPPKDDKPEETAETEEKKPAVAISAALVKQLRDETGAGMMDCKKALAETGGDIQQAQEFLRKKGLSSADKKSSRLTAEGLIGAYIHDNRIGCMIEINSETDFVARNEKFKELVNDLAMQVVACPQVEYVSIEDIPESVVIKEKEIEMQREDLQSKPENIREKIVEGRISKRLGVLALLEQPFIKDDSKTVKDLVKETIATLGENIKVRRFTRYTLGEN</sequence>
<dbReference type="EMBL" id="CM000137">
    <property type="protein sequence ID" value="EAY83405.1"/>
    <property type="molecule type" value="Genomic_DNA"/>
</dbReference>
<dbReference type="SMR" id="A2ZLC1"/>
<dbReference type="STRING" id="39946.A2ZLC1"/>
<dbReference type="EnsemblPlants" id="BGIOSGA037533-TA">
    <property type="protein sequence ID" value="BGIOSGA037533-PA"/>
    <property type="gene ID" value="BGIOSGA037533"/>
</dbReference>
<dbReference type="EnsemblPlants" id="OsLiXu_12g0016040.01">
    <property type="protein sequence ID" value="OsLiXu_12g0016040.01"/>
    <property type="gene ID" value="OsLiXu_12g0016040"/>
</dbReference>
<dbReference type="EnsemblPlants" id="OsMH63_12G016090_01">
    <property type="protein sequence ID" value="OsMH63_12G016090_01"/>
    <property type="gene ID" value="OsMH63_12G016090"/>
</dbReference>
<dbReference type="EnsemblPlants" id="OsMH63_12G016090_04">
    <property type="protein sequence ID" value="OsMH63_12G016090_04"/>
    <property type="gene ID" value="OsMH63_12G016090"/>
</dbReference>
<dbReference type="EnsemblPlants" id="OsPr106_12g0015560.02">
    <property type="protein sequence ID" value="OsPr106_12g0015560.02"/>
    <property type="gene ID" value="OsPr106_12g0015560"/>
</dbReference>
<dbReference type="EnsemblPlants" id="OsZS97_12G015850_02">
    <property type="protein sequence ID" value="OsZS97_12G015850_02"/>
    <property type="gene ID" value="OsZS97_12G015850"/>
</dbReference>
<dbReference type="Gramene" id="BGIOSGA037533-TA">
    <property type="protein sequence ID" value="BGIOSGA037533-PA"/>
    <property type="gene ID" value="BGIOSGA037533"/>
</dbReference>
<dbReference type="Gramene" id="OsLiXu_12g0016040.01">
    <property type="protein sequence ID" value="OsLiXu_12g0016040.01"/>
    <property type="gene ID" value="OsLiXu_12g0016040"/>
</dbReference>
<dbReference type="Gramene" id="OsMH63_12G016090_01">
    <property type="protein sequence ID" value="OsMH63_12G016090_01"/>
    <property type="gene ID" value="OsMH63_12G016090"/>
</dbReference>
<dbReference type="Gramene" id="OsMH63_12G016090_04">
    <property type="protein sequence ID" value="OsMH63_12G016090_04"/>
    <property type="gene ID" value="OsMH63_12G016090"/>
</dbReference>
<dbReference type="Gramene" id="OsPr106_12g0015560.02">
    <property type="protein sequence ID" value="OsPr106_12g0015560.02"/>
    <property type="gene ID" value="OsPr106_12g0015560"/>
</dbReference>
<dbReference type="Gramene" id="OsZS97_12G015850_02">
    <property type="protein sequence ID" value="OsZS97_12G015850_02"/>
    <property type="gene ID" value="OsZS97_12G015850"/>
</dbReference>
<dbReference type="HOGENOM" id="CLU_012395_0_0_1"/>
<dbReference type="OMA" id="MQVAAYP"/>
<dbReference type="Proteomes" id="UP000007015">
    <property type="component" value="Chromosome 12"/>
</dbReference>
<dbReference type="GO" id="GO:0009507">
    <property type="term" value="C:chloroplast"/>
    <property type="evidence" value="ECO:0000250"/>
    <property type="project" value="UniProtKB"/>
</dbReference>
<dbReference type="GO" id="GO:0043253">
    <property type="term" value="C:chloroplast ribosome"/>
    <property type="evidence" value="ECO:0000250"/>
    <property type="project" value="UniProtKB"/>
</dbReference>
<dbReference type="GO" id="GO:0005739">
    <property type="term" value="C:mitochondrion"/>
    <property type="evidence" value="ECO:0007669"/>
    <property type="project" value="UniProtKB-UniRule"/>
</dbReference>
<dbReference type="GO" id="GO:0003729">
    <property type="term" value="F:mRNA binding"/>
    <property type="evidence" value="ECO:0000250"/>
    <property type="project" value="UniProtKB"/>
</dbReference>
<dbReference type="GO" id="GO:0003746">
    <property type="term" value="F:translation elongation factor activity"/>
    <property type="evidence" value="ECO:0007669"/>
    <property type="project" value="UniProtKB-UniRule"/>
</dbReference>
<dbReference type="GO" id="GO:0061770">
    <property type="term" value="F:translation elongation factor binding"/>
    <property type="evidence" value="ECO:0000250"/>
    <property type="project" value="UniProtKB"/>
</dbReference>
<dbReference type="GO" id="GO:0070125">
    <property type="term" value="P:mitochondrial translational elongation"/>
    <property type="evidence" value="ECO:0007669"/>
    <property type="project" value="TreeGrafter"/>
</dbReference>
<dbReference type="CDD" id="cd14275">
    <property type="entry name" value="UBA_EF-Ts"/>
    <property type="match status" value="2"/>
</dbReference>
<dbReference type="FunFam" id="1.10.286.20:FF:000001">
    <property type="entry name" value="Elongation factor Ts"/>
    <property type="match status" value="2"/>
</dbReference>
<dbReference type="FunFam" id="1.10.8.10:FF:000001">
    <property type="entry name" value="Elongation factor Ts"/>
    <property type="match status" value="2"/>
</dbReference>
<dbReference type="FunFam" id="2.40.50.140:FF:000250">
    <property type="entry name" value="Elongation factor Ts, mitochondrial"/>
    <property type="match status" value="1"/>
</dbReference>
<dbReference type="FunFam" id="2.40.50.140:FF:000051">
    <property type="entry name" value="RNA-binding transcriptional accessory protein"/>
    <property type="match status" value="1"/>
</dbReference>
<dbReference type="Gene3D" id="1.10.286.20">
    <property type="match status" value="2"/>
</dbReference>
<dbReference type="Gene3D" id="1.10.8.10">
    <property type="entry name" value="DNA helicase RuvA subunit, C-terminal domain"/>
    <property type="match status" value="2"/>
</dbReference>
<dbReference type="Gene3D" id="3.30.479.20">
    <property type="entry name" value="Elongation factor Ts, dimerisation domain"/>
    <property type="match status" value="2"/>
</dbReference>
<dbReference type="Gene3D" id="2.40.50.140">
    <property type="entry name" value="Nucleic acid-binding proteins"/>
    <property type="match status" value="2"/>
</dbReference>
<dbReference type="HAMAP" id="MF_00050">
    <property type="entry name" value="EF_Ts"/>
    <property type="match status" value="2"/>
</dbReference>
<dbReference type="InterPro" id="IPR036402">
    <property type="entry name" value="EF-Ts_dimer_sf"/>
</dbReference>
<dbReference type="InterPro" id="IPR012340">
    <property type="entry name" value="NA-bd_OB-fold"/>
</dbReference>
<dbReference type="InterPro" id="IPR003029">
    <property type="entry name" value="S1_domain"/>
</dbReference>
<dbReference type="InterPro" id="IPR001816">
    <property type="entry name" value="Transl_elong_EFTs/EF1B"/>
</dbReference>
<dbReference type="InterPro" id="IPR014039">
    <property type="entry name" value="Transl_elong_EFTs/EF1B_dimer"/>
</dbReference>
<dbReference type="InterPro" id="IPR018101">
    <property type="entry name" value="Transl_elong_Ts_CS"/>
</dbReference>
<dbReference type="InterPro" id="IPR009060">
    <property type="entry name" value="UBA-like_sf"/>
</dbReference>
<dbReference type="NCBIfam" id="TIGR00116">
    <property type="entry name" value="tsf"/>
    <property type="match status" value="3"/>
</dbReference>
<dbReference type="PANTHER" id="PTHR11741">
    <property type="entry name" value="ELONGATION FACTOR TS"/>
    <property type="match status" value="1"/>
</dbReference>
<dbReference type="PANTHER" id="PTHR11741:SF10">
    <property type="entry name" value="POLYPROTEIN OF EF-TS, CHLOROPLASTIC"/>
    <property type="match status" value="1"/>
</dbReference>
<dbReference type="Pfam" id="PF00889">
    <property type="entry name" value="EF_TS"/>
    <property type="match status" value="2"/>
</dbReference>
<dbReference type="Pfam" id="PF00575">
    <property type="entry name" value="S1"/>
    <property type="match status" value="1"/>
</dbReference>
<dbReference type="SMART" id="SM00316">
    <property type="entry name" value="S1"/>
    <property type="match status" value="2"/>
</dbReference>
<dbReference type="SUPFAM" id="SSF54713">
    <property type="entry name" value="Elongation factor Ts (EF-Ts), dimerisation domain"/>
    <property type="match status" value="2"/>
</dbReference>
<dbReference type="SUPFAM" id="SSF50249">
    <property type="entry name" value="Nucleic acid-binding proteins"/>
    <property type="match status" value="2"/>
</dbReference>
<dbReference type="SUPFAM" id="SSF46934">
    <property type="entry name" value="UBA-like"/>
    <property type="match status" value="2"/>
</dbReference>
<dbReference type="PROSITE" id="PS01126">
    <property type="entry name" value="EF_TS_1"/>
    <property type="match status" value="2"/>
</dbReference>
<dbReference type="PROSITE" id="PS01127">
    <property type="entry name" value="EF_TS_2"/>
    <property type="match status" value="2"/>
</dbReference>
<dbReference type="PROSITE" id="PS50126">
    <property type="entry name" value="S1"/>
    <property type="match status" value="2"/>
</dbReference>
<feature type="transit peptide" description="Chloroplast" evidence="2">
    <location>
        <begin position="1"/>
        <end position="73"/>
    </location>
</feature>
<feature type="chain" id="PRO_0000449228" description="Polyprotein of EF-Ts, chloroplastic">
    <location>
        <begin position="74"/>
        <end position="1123"/>
    </location>
</feature>
<feature type="chain" id="PRO_0000449229" description="Plastid-specific ribosomal protein-7, chloroplastic">
    <location>
        <begin position="74"/>
        <end position="686"/>
    </location>
</feature>
<feature type="chain" id="PRO_0000449230" description="Elongation factor Ts, chloroplastic">
    <location>
        <begin position="687"/>
        <end position="1123"/>
    </location>
</feature>
<feature type="domain" description="S1 motif 1" evidence="3">
    <location>
        <begin position="143"/>
        <end position="212"/>
    </location>
</feature>
<feature type="domain" description="S1 motif 2" evidence="3">
    <location>
        <begin position="263"/>
        <end position="331"/>
    </location>
</feature>
<feature type="region of interest" description="Disordered" evidence="4">
    <location>
        <begin position="68"/>
        <end position="141"/>
    </location>
</feature>
<feature type="region of interest" description="Disordered" evidence="4">
    <location>
        <begin position="213"/>
        <end position="258"/>
    </location>
</feature>
<feature type="region of interest" description="Disordered" evidence="4">
    <location>
        <begin position="443"/>
        <end position="670"/>
    </location>
</feature>
<feature type="region of interest" description="Disordered" evidence="4">
    <location>
        <begin position="894"/>
        <end position="923"/>
    </location>
</feature>
<feature type="compositionally biased region" description="Acidic residues" evidence="4">
    <location>
        <begin position="94"/>
        <end position="103"/>
    </location>
</feature>
<feature type="compositionally biased region" description="Low complexity" evidence="4">
    <location>
        <begin position="106"/>
        <end position="119"/>
    </location>
</feature>
<feature type="compositionally biased region" description="Polar residues" evidence="4">
    <location>
        <begin position="231"/>
        <end position="244"/>
    </location>
</feature>
<feature type="compositionally biased region" description="Basic and acidic residues" evidence="4">
    <location>
        <begin position="245"/>
        <end position="254"/>
    </location>
</feature>
<feature type="compositionally biased region" description="Polar residues" evidence="4">
    <location>
        <begin position="486"/>
        <end position="501"/>
    </location>
</feature>
<feature type="compositionally biased region" description="Low complexity" evidence="4">
    <location>
        <begin position="551"/>
        <end position="587"/>
    </location>
</feature>
<feature type="compositionally biased region" description="Acidic residues" evidence="4">
    <location>
        <begin position="630"/>
        <end position="639"/>
    </location>
</feature>
<feature type="compositionally biased region" description="Low complexity" evidence="4">
    <location>
        <begin position="657"/>
        <end position="670"/>
    </location>
</feature>
<feature type="compositionally biased region" description="Low complexity" evidence="4">
    <location>
        <begin position="894"/>
        <end position="903"/>
    </location>
</feature>
<feature type="compositionally biased region" description="Basic and acidic residues" evidence="4">
    <location>
        <begin position="908"/>
        <end position="923"/>
    </location>
</feature>
<name>PETS_ORYSI</name>
<comment type="function">
    <molecule>Elongation factor Ts, chloroplastic</molecule>
    <text evidence="1">Associates with the EF-Tu.GDP complex and induces the exchange of GDP to GTP (By similarity). It remains bound to the aminoacyl-tRNA.EF-Tu.GTP complex up to the GTP hydrolysis stage on the ribosome (By similarity).</text>
</comment>
<comment type="function">
    <molecule>Plastid-specific ribosomal protein-7, chloroplastic</molecule>
    <text evidence="1">Binds to psbD and psbA 5'-untranslated regions (UTRs) in vitro.</text>
</comment>
<comment type="subunit">
    <molecule>Plastid-specific ribosomal protein-7, chloroplastic</molecule>
    <text evidence="1">Component of the chloroplast ribosome 30S and 70S subunits, as well as polysomes.</text>
</comment>
<comment type="subunit">
    <molecule>Polyprotein of EF-Ts, chloroplastic</molecule>
    <text evidence="1">Component of the chloroplast ribosome 70S subunit, and at low levels, present in polysomes.</text>
</comment>
<comment type="subunit">
    <molecule>Elongation factor Ts, chloroplastic</molecule>
    <text evidence="1">Associates transiently with chloroplast polysomes.</text>
</comment>
<comment type="subcellular location">
    <subcellularLocation>
        <location evidence="1">Plastid</location>
        <location evidence="1">Chloroplast</location>
    </subcellularLocation>
</comment>
<comment type="similarity">
    <molecule>Elongation factor Ts, chloroplastic</molecule>
    <text evidence="6">Belongs to the EF-Ts family.</text>
</comment>
<gene>
    <name evidence="5" type="primary">PETs</name>
    <name evidence="5" type="synonym">EFTS</name>
    <name evidence="5" type="synonym">PSRP-7</name>
    <name evidence="7" type="ORF">OsI_38621</name>
</gene>
<protein>
    <recommendedName>
        <fullName evidence="5">Polyprotein of EF-Ts, chloroplastic</fullName>
    </recommendedName>
    <component>
        <recommendedName>
            <fullName evidence="5">Plastid-specific ribosomal protein-7, chloroplastic</fullName>
        </recommendedName>
    </component>
    <component>
        <recommendedName>
            <fullName evidence="5">Elongation factor Ts, chloroplastic</fullName>
            <shortName evidence="5">EF-Ts</shortName>
        </recommendedName>
    </component>
</protein>
<reference key="1">
    <citation type="journal article" date="2005" name="PLoS Biol.">
        <title>The genomes of Oryza sativa: a history of duplications.</title>
        <authorList>
            <person name="Yu J."/>
            <person name="Wang J."/>
            <person name="Lin W."/>
            <person name="Li S."/>
            <person name="Li H."/>
            <person name="Zhou J."/>
            <person name="Ni P."/>
            <person name="Dong W."/>
            <person name="Hu S."/>
            <person name="Zeng C."/>
            <person name="Zhang J."/>
            <person name="Zhang Y."/>
            <person name="Li R."/>
            <person name="Xu Z."/>
            <person name="Li S."/>
            <person name="Li X."/>
            <person name="Zheng H."/>
            <person name="Cong L."/>
            <person name="Lin L."/>
            <person name="Yin J."/>
            <person name="Geng J."/>
            <person name="Li G."/>
            <person name="Shi J."/>
            <person name="Liu J."/>
            <person name="Lv H."/>
            <person name="Li J."/>
            <person name="Wang J."/>
            <person name="Deng Y."/>
            <person name="Ran L."/>
            <person name="Shi X."/>
            <person name="Wang X."/>
            <person name="Wu Q."/>
            <person name="Li C."/>
            <person name="Ren X."/>
            <person name="Wang J."/>
            <person name="Wang X."/>
            <person name="Li D."/>
            <person name="Liu D."/>
            <person name="Zhang X."/>
            <person name="Ji Z."/>
            <person name="Zhao W."/>
            <person name="Sun Y."/>
            <person name="Zhang Z."/>
            <person name="Bao J."/>
            <person name="Han Y."/>
            <person name="Dong L."/>
            <person name="Ji J."/>
            <person name="Chen P."/>
            <person name="Wu S."/>
            <person name="Liu J."/>
            <person name="Xiao Y."/>
            <person name="Bu D."/>
            <person name="Tan J."/>
            <person name="Yang L."/>
            <person name="Ye C."/>
            <person name="Zhang J."/>
            <person name="Xu J."/>
            <person name="Zhou Y."/>
            <person name="Yu Y."/>
            <person name="Zhang B."/>
            <person name="Zhuang S."/>
            <person name="Wei H."/>
            <person name="Liu B."/>
            <person name="Lei M."/>
            <person name="Yu H."/>
            <person name="Li Y."/>
            <person name="Xu H."/>
            <person name="Wei S."/>
            <person name="He X."/>
            <person name="Fang L."/>
            <person name="Zhang Z."/>
            <person name="Zhang Y."/>
            <person name="Huang X."/>
            <person name="Su Z."/>
            <person name="Tong W."/>
            <person name="Li J."/>
            <person name="Tong Z."/>
            <person name="Li S."/>
            <person name="Ye J."/>
            <person name="Wang L."/>
            <person name="Fang L."/>
            <person name="Lei T."/>
            <person name="Chen C.-S."/>
            <person name="Chen H.-C."/>
            <person name="Xu Z."/>
            <person name="Li H."/>
            <person name="Huang H."/>
            <person name="Zhang F."/>
            <person name="Xu H."/>
            <person name="Li N."/>
            <person name="Zhao C."/>
            <person name="Li S."/>
            <person name="Dong L."/>
            <person name="Huang Y."/>
            <person name="Li L."/>
            <person name="Xi Y."/>
            <person name="Qi Q."/>
            <person name="Li W."/>
            <person name="Zhang B."/>
            <person name="Hu W."/>
            <person name="Zhang Y."/>
            <person name="Tian X."/>
            <person name="Jiao Y."/>
            <person name="Liang X."/>
            <person name="Jin J."/>
            <person name="Gao L."/>
            <person name="Zheng W."/>
            <person name="Hao B."/>
            <person name="Liu S.-M."/>
            <person name="Wang W."/>
            <person name="Yuan L."/>
            <person name="Cao M."/>
            <person name="McDermott J."/>
            <person name="Samudrala R."/>
            <person name="Wang J."/>
            <person name="Wong G.K.-S."/>
            <person name="Yang H."/>
        </authorList>
    </citation>
    <scope>NUCLEOTIDE SEQUENCE [LARGE SCALE GENOMIC DNA]</scope>
    <source>
        <strain>cv. 93-11</strain>
    </source>
</reference>
<reference key="2">
    <citation type="journal article" date="2004" name="Plant Cell">
        <title>Chloroplast elongation factor ts pro-protein is an evolutionarily conserved fusion with the s1 domain-containing plastid-specific ribosomal protein-7.</title>
        <authorList>
            <person name="Beligni M.V."/>
            <person name="Yamaguchi K."/>
            <person name="Mayfield S.P."/>
        </authorList>
    </citation>
    <scope>GENE FAMILY</scope>
</reference>